<feature type="chain" id="PRO_1000101162" description="Lysine--tRNA ligase">
    <location>
        <begin position="1"/>
        <end position="506"/>
    </location>
</feature>
<feature type="binding site" evidence="1">
    <location>
        <position position="416"/>
    </location>
    <ligand>
        <name>Mg(2+)</name>
        <dbReference type="ChEBI" id="CHEBI:18420"/>
        <label>1</label>
    </ligand>
</feature>
<feature type="binding site" evidence="1">
    <location>
        <position position="423"/>
    </location>
    <ligand>
        <name>Mg(2+)</name>
        <dbReference type="ChEBI" id="CHEBI:18420"/>
        <label>1</label>
    </ligand>
</feature>
<feature type="binding site" evidence="1">
    <location>
        <position position="423"/>
    </location>
    <ligand>
        <name>Mg(2+)</name>
        <dbReference type="ChEBI" id="CHEBI:18420"/>
        <label>2</label>
    </ligand>
</feature>
<keyword id="KW-0030">Aminoacyl-tRNA synthetase</keyword>
<keyword id="KW-0067">ATP-binding</keyword>
<keyword id="KW-0963">Cytoplasm</keyword>
<keyword id="KW-0436">Ligase</keyword>
<keyword id="KW-0460">Magnesium</keyword>
<keyword id="KW-0479">Metal-binding</keyword>
<keyword id="KW-0547">Nucleotide-binding</keyword>
<keyword id="KW-0648">Protein biosynthesis</keyword>
<comment type="catalytic activity">
    <reaction evidence="1">
        <text>tRNA(Lys) + L-lysine + ATP = L-lysyl-tRNA(Lys) + AMP + diphosphate</text>
        <dbReference type="Rhea" id="RHEA:20792"/>
        <dbReference type="Rhea" id="RHEA-COMP:9696"/>
        <dbReference type="Rhea" id="RHEA-COMP:9697"/>
        <dbReference type="ChEBI" id="CHEBI:30616"/>
        <dbReference type="ChEBI" id="CHEBI:32551"/>
        <dbReference type="ChEBI" id="CHEBI:33019"/>
        <dbReference type="ChEBI" id="CHEBI:78442"/>
        <dbReference type="ChEBI" id="CHEBI:78529"/>
        <dbReference type="ChEBI" id="CHEBI:456215"/>
        <dbReference type="EC" id="6.1.1.6"/>
    </reaction>
</comment>
<comment type="cofactor">
    <cofactor evidence="1">
        <name>Mg(2+)</name>
        <dbReference type="ChEBI" id="CHEBI:18420"/>
    </cofactor>
    <text evidence="1">Binds 3 Mg(2+) ions per subunit.</text>
</comment>
<comment type="subunit">
    <text evidence="1">Homodimer.</text>
</comment>
<comment type="subcellular location">
    <subcellularLocation>
        <location evidence="1">Cytoplasm</location>
    </subcellularLocation>
</comment>
<comment type="similarity">
    <text evidence="1">Belongs to the class-II aminoacyl-tRNA synthetase family.</text>
</comment>
<evidence type="ECO:0000255" key="1">
    <source>
        <dbReference type="HAMAP-Rule" id="MF_00252"/>
    </source>
</evidence>
<proteinExistence type="inferred from homology"/>
<reference key="1">
    <citation type="journal article" date="2010" name="J. Bacteriol.">
        <title>Whole genome sequences of two Xylella fastidiosa strains (M12 and M23) causing almond leaf scorch disease in California.</title>
        <authorList>
            <person name="Chen J."/>
            <person name="Xie G."/>
            <person name="Han S."/>
            <person name="Chertkov O."/>
            <person name="Sims D."/>
            <person name="Civerolo E.L."/>
        </authorList>
    </citation>
    <scope>NUCLEOTIDE SEQUENCE [LARGE SCALE GENOMIC DNA]</scope>
    <source>
        <strain>M12</strain>
    </source>
</reference>
<name>SYK_XYLFM</name>
<gene>
    <name evidence="1" type="primary">lysS</name>
    <name type="ordered locus">Xfasm12_0457</name>
</gene>
<protein>
    <recommendedName>
        <fullName evidence="1">Lysine--tRNA ligase</fullName>
        <ecNumber evidence="1">6.1.1.6</ecNumber>
    </recommendedName>
    <alternativeName>
        <fullName evidence="1">Lysyl-tRNA synthetase</fullName>
        <shortName evidence="1">LysRS</shortName>
    </alternativeName>
</protein>
<organism>
    <name type="scientific">Xylella fastidiosa (strain M12)</name>
    <dbReference type="NCBI Taxonomy" id="405440"/>
    <lineage>
        <taxon>Bacteria</taxon>
        <taxon>Pseudomonadati</taxon>
        <taxon>Pseudomonadota</taxon>
        <taxon>Gammaproteobacteria</taxon>
        <taxon>Lysobacterales</taxon>
        <taxon>Lysobacteraceae</taxon>
        <taxon>Xylella</taxon>
    </lineage>
</organism>
<dbReference type="EC" id="6.1.1.6" evidence="1"/>
<dbReference type="EMBL" id="CP000941">
    <property type="protein sequence ID" value="ACA11468.1"/>
    <property type="molecule type" value="Genomic_DNA"/>
</dbReference>
<dbReference type="RefSeq" id="WP_004085668.1">
    <property type="nucleotide sequence ID" value="NC_010513.1"/>
</dbReference>
<dbReference type="SMR" id="B0U572"/>
<dbReference type="KEGG" id="xfm:Xfasm12_0457"/>
<dbReference type="HOGENOM" id="CLU_008255_6_0_6"/>
<dbReference type="GO" id="GO:0005829">
    <property type="term" value="C:cytosol"/>
    <property type="evidence" value="ECO:0007669"/>
    <property type="project" value="TreeGrafter"/>
</dbReference>
<dbReference type="GO" id="GO:0005524">
    <property type="term" value="F:ATP binding"/>
    <property type="evidence" value="ECO:0007669"/>
    <property type="project" value="UniProtKB-UniRule"/>
</dbReference>
<dbReference type="GO" id="GO:0004824">
    <property type="term" value="F:lysine-tRNA ligase activity"/>
    <property type="evidence" value="ECO:0007669"/>
    <property type="project" value="UniProtKB-UniRule"/>
</dbReference>
<dbReference type="GO" id="GO:0000287">
    <property type="term" value="F:magnesium ion binding"/>
    <property type="evidence" value="ECO:0007669"/>
    <property type="project" value="UniProtKB-UniRule"/>
</dbReference>
<dbReference type="GO" id="GO:0000049">
    <property type="term" value="F:tRNA binding"/>
    <property type="evidence" value="ECO:0007669"/>
    <property type="project" value="TreeGrafter"/>
</dbReference>
<dbReference type="GO" id="GO:0006430">
    <property type="term" value="P:lysyl-tRNA aminoacylation"/>
    <property type="evidence" value="ECO:0007669"/>
    <property type="project" value="UniProtKB-UniRule"/>
</dbReference>
<dbReference type="CDD" id="cd00775">
    <property type="entry name" value="LysRS_core"/>
    <property type="match status" value="1"/>
</dbReference>
<dbReference type="CDD" id="cd04322">
    <property type="entry name" value="LysRS_N"/>
    <property type="match status" value="1"/>
</dbReference>
<dbReference type="FunFam" id="2.40.50.140:FF:000024">
    <property type="entry name" value="Lysine--tRNA ligase"/>
    <property type="match status" value="1"/>
</dbReference>
<dbReference type="FunFam" id="3.30.930.10:FF:000001">
    <property type="entry name" value="Lysine--tRNA ligase"/>
    <property type="match status" value="1"/>
</dbReference>
<dbReference type="Gene3D" id="3.30.930.10">
    <property type="entry name" value="Bira Bifunctional Protein, Domain 2"/>
    <property type="match status" value="1"/>
</dbReference>
<dbReference type="Gene3D" id="2.40.50.140">
    <property type="entry name" value="Nucleic acid-binding proteins"/>
    <property type="match status" value="1"/>
</dbReference>
<dbReference type="HAMAP" id="MF_00252">
    <property type="entry name" value="Lys_tRNA_synth_class2"/>
    <property type="match status" value="1"/>
</dbReference>
<dbReference type="InterPro" id="IPR004364">
    <property type="entry name" value="Aa-tRNA-synt_II"/>
</dbReference>
<dbReference type="InterPro" id="IPR006195">
    <property type="entry name" value="aa-tRNA-synth_II"/>
</dbReference>
<dbReference type="InterPro" id="IPR045864">
    <property type="entry name" value="aa-tRNA-synth_II/BPL/LPL"/>
</dbReference>
<dbReference type="InterPro" id="IPR002313">
    <property type="entry name" value="Lys-tRNA-ligase_II"/>
</dbReference>
<dbReference type="InterPro" id="IPR044136">
    <property type="entry name" value="Lys-tRNA-ligase_II_N"/>
</dbReference>
<dbReference type="InterPro" id="IPR018149">
    <property type="entry name" value="Lys-tRNA-synth_II_C"/>
</dbReference>
<dbReference type="InterPro" id="IPR012340">
    <property type="entry name" value="NA-bd_OB-fold"/>
</dbReference>
<dbReference type="InterPro" id="IPR004365">
    <property type="entry name" value="NA-bd_OB_tRNA"/>
</dbReference>
<dbReference type="NCBIfam" id="TIGR00499">
    <property type="entry name" value="lysS_bact"/>
    <property type="match status" value="1"/>
</dbReference>
<dbReference type="NCBIfam" id="NF001756">
    <property type="entry name" value="PRK00484.1"/>
    <property type="match status" value="1"/>
</dbReference>
<dbReference type="PANTHER" id="PTHR42918:SF15">
    <property type="entry name" value="LYSINE--TRNA LIGASE, CHLOROPLASTIC_MITOCHONDRIAL"/>
    <property type="match status" value="1"/>
</dbReference>
<dbReference type="PANTHER" id="PTHR42918">
    <property type="entry name" value="LYSYL-TRNA SYNTHETASE"/>
    <property type="match status" value="1"/>
</dbReference>
<dbReference type="Pfam" id="PF00152">
    <property type="entry name" value="tRNA-synt_2"/>
    <property type="match status" value="1"/>
</dbReference>
<dbReference type="Pfam" id="PF01336">
    <property type="entry name" value="tRNA_anti-codon"/>
    <property type="match status" value="1"/>
</dbReference>
<dbReference type="PRINTS" id="PR00982">
    <property type="entry name" value="TRNASYNTHLYS"/>
</dbReference>
<dbReference type="SUPFAM" id="SSF55681">
    <property type="entry name" value="Class II aaRS and biotin synthetases"/>
    <property type="match status" value="1"/>
</dbReference>
<dbReference type="SUPFAM" id="SSF50249">
    <property type="entry name" value="Nucleic acid-binding proteins"/>
    <property type="match status" value="1"/>
</dbReference>
<dbReference type="PROSITE" id="PS50862">
    <property type="entry name" value="AA_TRNA_LIGASE_II"/>
    <property type="match status" value="1"/>
</dbReference>
<accession>B0U572</accession>
<sequence>MTEHLPASQVSFDENALIAERRAKLLALRAQGVVYPNDVKREHYAADVQAAFANVETWTAETLEASSHRVRMAGRLMAKRLMGKASFAQIQDESGRIQLLIQSNVLGEDSYAAFKVLDVGDIIAVEGGLTRTRTGELSVKVNVLRLLTKALRPLPDKWHGLTDVEQRYRQRYVDLIVTPESREIFIKRSKIIRALRTWLDARLFLEVETPMMHYIPGGAAAKPFVTYHNALDLELYLRVAPELYLKRLVVGGLERVYEINRNFRNEGVSTRHNPEFTMLELYEAYSTYHEVMDLAETMIRDTAQSVLGTTQVIWDGAQIDLGPIFRRWRMDEAVCHHNPEISVAECTDRDALLLHCERLKIKVKSSYGWGRLLLSIFEATVEHTLIQPTFITDHPVEISPLARESDIESGYTDRFELFINGKEIANGFSELNDPEEQAMRFQKQVEAKEGGDDEAMYYDADYIRALEYGMAPTGGLGIGVDRLVMLLTGSTSIRDVLLFPYMRPER</sequence>